<proteinExistence type="inferred from homology"/>
<gene>
    <name evidence="1" type="primary">psaI</name>
    <name type="ORF">PSC0616</name>
</gene>
<name>PSAI_PANGI</name>
<protein>
    <recommendedName>
        <fullName evidence="1">Photosystem I reaction center subunit VIII</fullName>
        <shortName evidence="1">PSI-I</shortName>
    </recommendedName>
</protein>
<dbReference type="EMBL" id="AY582139">
    <property type="protein sequence ID" value="AAT98519.1"/>
    <property type="molecule type" value="Genomic_DNA"/>
</dbReference>
<dbReference type="RefSeq" id="YP_086976.1">
    <property type="nucleotide sequence ID" value="NC_006290.1"/>
</dbReference>
<dbReference type="SMR" id="Q68RZ6"/>
<dbReference type="GeneID" id="3021469"/>
<dbReference type="GO" id="GO:0009535">
    <property type="term" value="C:chloroplast thylakoid membrane"/>
    <property type="evidence" value="ECO:0007669"/>
    <property type="project" value="UniProtKB-SubCell"/>
</dbReference>
<dbReference type="GO" id="GO:0009522">
    <property type="term" value="C:photosystem I"/>
    <property type="evidence" value="ECO:0007669"/>
    <property type="project" value="UniProtKB-KW"/>
</dbReference>
<dbReference type="GO" id="GO:0015979">
    <property type="term" value="P:photosynthesis"/>
    <property type="evidence" value="ECO:0007669"/>
    <property type="project" value="UniProtKB-UniRule"/>
</dbReference>
<dbReference type="HAMAP" id="MF_00431">
    <property type="entry name" value="PSI_PsaI"/>
    <property type="match status" value="1"/>
</dbReference>
<dbReference type="InterPro" id="IPR001302">
    <property type="entry name" value="PSI_PsaI"/>
</dbReference>
<dbReference type="InterPro" id="IPR036357">
    <property type="entry name" value="PSI_PsaI_sf"/>
</dbReference>
<dbReference type="NCBIfam" id="TIGR03052">
    <property type="entry name" value="PS_I_psaI"/>
    <property type="match status" value="1"/>
</dbReference>
<dbReference type="PANTHER" id="PTHR35775">
    <property type="match status" value="1"/>
</dbReference>
<dbReference type="PANTHER" id="PTHR35775:SF2">
    <property type="entry name" value="PHOTOSYSTEM I REACTION CENTER SUBUNIT VIII"/>
    <property type="match status" value="1"/>
</dbReference>
<dbReference type="Pfam" id="PF00796">
    <property type="entry name" value="PSI_8"/>
    <property type="match status" value="1"/>
</dbReference>
<dbReference type="SUPFAM" id="SSF81540">
    <property type="entry name" value="Subunit VIII of photosystem I reaction centre, PsaI"/>
    <property type="match status" value="1"/>
</dbReference>
<sequence>MTTFDFPSVLVPLVGLVFPAMAMASLSLHVQKNKTV</sequence>
<comment type="function">
    <text evidence="1">May help in the organization of the PsaL subunit.</text>
</comment>
<comment type="subcellular location">
    <subcellularLocation>
        <location evidence="1">Plastid</location>
        <location evidence="1">Chloroplast thylakoid membrane</location>
        <topology evidence="1">Single-pass membrane protein</topology>
    </subcellularLocation>
</comment>
<comment type="similarity">
    <text evidence="1">Belongs to the PsaI family.</text>
</comment>
<keyword id="KW-0150">Chloroplast</keyword>
<keyword id="KW-0472">Membrane</keyword>
<keyword id="KW-0602">Photosynthesis</keyword>
<keyword id="KW-0603">Photosystem I</keyword>
<keyword id="KW-0934">Plastid</keyword>
<keyword id="KW-0793">Thylakoid</keyword>
<keyword id="KW-0812">Transmembrane</keyword>
<keyword id="KW-1133">Transmembrane helix</keyword>
<evidence type="ECO:0000255" key="1">
    <source>
        <dbReference type="HAMAP-Rule" id="MF_00431"/>
    </source>
</evidence>
<feature type="chain" id="PRO_0000194667" description="Photosystem I reaction center subunit VIII">
    <location>
        <begin position="1"/>
        <end position="36"/>
    </location>
</feature>
<feature type="transmembrane region" description="Helical" evidence="1">
    <location>
        <begin position="6"/>
        <end position="28"/>
    </location>
</feature>
<geneLocation type="chloroplast"/>
<reference key="1">
    <citation type="journal article" date="2004" name="DNA Res.">
        <title>Complete chloroplast genome sequence from Korea ginseng (Panax schinseng Nees) and comparative analysis of sequence evolution among 17 vascular plants.</title>
        <authorList>
            <person name="Kim K.-J."/>
            <person name="Lee H.-L."/>
        </authorList>
    </citation>
    <scope>NUCLEOTIDE SEQUENCE [LARGE SCALE GENOMIC DNA]</scope>
</reference>
<organism>
    <name type="scientific">Panax ginseng</name>
    <name type="common">Korean ginseng</name>
    <dbReference type="NCBI Taxonomy" id="4054"/>
    <lineage>
        <taxon>Eukaryota</taxon>
        <taxon>Viridiplantae</taxon>
        <taxon>Streptophyta</taxon>
        <taxon>Embryophyta</taxon>
        <taxon>Tracheophyta</taxon>
        <taxon>Spermatophyta</taxon>
        <taxon>Magnoliopsida</taxon>
        <taxon>eudicotyledons</taxon>
        <taxon>Gunneridae</taxon>
        <taxon>Pentapetalae</taxon>
        <taxon>asterids</taxon>
        <taxon>campanulids</taxon>
        <taxon>Apiales</taxon>
        <taxon>Araliaceae</taxon>
        <taxon>Panax</taxon>
    </lineage>
</organism>
<accession>Q68RZ6</accession>